<sequence>MLHSLVPRYNKCVPFPTLRTDNNGARKQAEHPNNQSHHNHPHPTSNPNELPKPKRVLYPRENIRIGWKQSERKWQVGTGMINVGNTCYLNSTLQALLHIPALANWLVSEQAHLADCNVAEPGSGCIICAMAKTLLATQSNQSAVRPFLIYSKLKQICKHMVVGRQEDAHEFLRFLVEAMERAYLMRFRNYKELDQLVKETTPLGQIFGGYLRSEVRCLSCNHVSITFQHFQDLLLDIRKADSLEDAFEGHFSRERLEDMGYKCEGCKKKVSATKQFSLERAPITLCIQLKRFSMIGNKLTKQISFKPRIDLSKYAARSPAAQAQPLTYRLVSMVTHLGASQHCGHYTAIGSTDTGSFYNFDDSYVRPITMQNVCNTNAYIMFFELDLSQAASPPANRPNGVRLTNGHSTTPVPAATVSSPSPTRFIGPQLPPVGANGYTNGNAQKTAIQFKQQNQQNGLQLGTGKFQDTAKPPLVGAYAKGEATSAPTANGNKSSSPSSNSSSNHKSINQQQYLPISSDDEDIDDEMKPGPTTAQLPSMPNMTEDSTEPKAKSPVKIHLKTPVKTPLKSLVPYESASEEEEAPLPNPRQSTEGEDFSESDQESGQTNGHSKTNGSLTNGSASSSVHVNNSKQKTDAIDEIFKSLKKSADSEEDDDEEEPSIQLTNGWHPQKQSQSQSKAPPSPKTPPSPAVIKSKTGIWKVTRNDEVDAIDDDDDAVVVEGAPVKIPTPNKTHRNPFSSSKPSTDSPATPGAKRQKLLNGSALKSHQQPRVGNGYQSNVTSNGSTVNELLKQSYRGYGASVLSWNGKPAELEKEPFELVCAKRIAGHGSVEGSDIVEGSVAVDAAVTSSSDSNDVVVIAVALLVDAREQRQRDLDDDEENEMDRGRQRKVKSGSAKGNNASNSTPGYNPFQEYEGQKRWNKNGGGGGFSRFHNQNYRQNFQQRNKFKFNRFGGQGSAKFQQQRALQRHLSAGGGFSRRQPSAQQQQQT</sequence>
<protein>
    <recommendedName>
        <fullName>Ubiquitin carboxyl-terminal hydrolase 36</fullName>
        <ecNumber>3.4.19.12</ecNumber>
    </recommendedName>
    <alternativeName>
        <fullName>Deubiquitinating enzyme 36</fullName>
    </alternativeName>
    <alternativeName>
        <fullName>Protein scrawny</fullName>
    </alternativeName>
    <alternativeName>
        <fullName>Ubiquitin thioesterase 36</fullName>
    </alternativeName>
    <alternativeName>
        <fullName>Ubiquitin-specific-processing protease 36</fullName>
    </alternativeName>
</protein>
<organism>
    <name type="scientific">Drosophila simulans</name>
    <name type="common">Fruit fly</name>
    <dbReference type="NCBI Taxonomy" id="7240"/>
    <lineage>
        <taxon>Eukaryota</taxon>
        <taxon>Metazoa</taxon>
        <taxon>Ecdysozoa</taxon>
        <taxon>Arthropoda</taxon>
        <taxon>Hexapoda</taxon>
        <taxon>Insecta</taxon>
        <taxon>Pterygota</taxon>
        <taxon>Neoptera</taxon>
        <taxon>Endopterygota</taxon>
        <taxon>Diptera</taxon>
        <taxon>Brachycera</taxon>
        <taxon>Muscomorpha</taxon>
        <taxon>Ephydroidea</taxon>
        <taxon>Drosophilidae</taxon>
        <taxon>Drosophila</taxon>
        <taxon>Sophophora</taxon>
    </lineage>
</organism>
<proteinExistence type="inferred from homology"/>
<dbReference type="EC" id="3.4.19.12"/>
<dbReference type="EMBL" id="CM000363">
    <property type="protein sequence ID" value="EDX09348.1"/>
    <property type="molecule type" value="Genomic_DNA"/>
</dbReference>
<dbReference type="SMR" id="B4QIS3"/>
<dbReference type="STRING" id="7240.B4QIS3"/>
<dbReference type="EnsemblMetazoa" id="FBtr0356385">
    <property type="protein sequence ID" value="FBpp0320570"/>
    <property type="gene ID" value="FBgn0185595"/>
</dbReference>
<dbReference type="EnsemblMetazoa" id="XM_016170912.3">
    <property type="protein sequence ID" value="XP_016030564.1"/>
    <property type="gene ID" value="LOC6736916"/>
</dbReference>
<dbReference type="HOGENOM" id="CLU_006208_0_0_1"/>
<dbReference type="OMA" id="VCAMAKT"/>
<dbReference type="OrthoDB" id="420187at2759"/>
<dbReference type="PhylomeDB" id="B4QIS3"/>
<dbReference type="ChiTaRS" id="scny">
    <property type="organism name" value="fly"/>
</dbReference>
<dbReference type="Proteomes" id="UP000000304">
    <property type="component" value="Chromosome 3L"/>
</dbReference>
<dbReference type="Bgee" id="FBgn0185595">
    <property type="expression patterns" value="Expressed in female reproductive system and 3 other cell types or tissues"/>
</dbReference>
<dbReference type="GO" id="GO:0005829">
    <property type="term" value="C:cytosol"/>
    <property type="evidence" value="ECO:0007669"/>
    <property type="project" value="TreeGrafter"/>
</dbReference>
<dbReference type="GO" id="GO:0005730">
    <property type="term" value="C:nucleolus"/>
    <property type="evidence" value="ECO:0000250"/>
    <property type="project" value="UniProtKB"/>
</dbReference>
<dbReference type="GO" id="GO:0004843">
    <property type="term" value="F:cysteine-type deubiquitinase activity"/>
    <property type="evidence" value="ECO:0000250"/>
    <property type="project" value="UniProtKB"/>
</dbReference>
<dbReference type="GO" id="GO:0030718">
    <property type="term" value="P:germ-line stem cell population maintenance"/>
    <property type="evidence" value="ECO:0000250"/>
    <property type="project" value="UniProtKB"/>
</dbReference>
<dbReference type="GO" id="GO:0016242">
    <property type="term" value="P:negative regulation of macroautophagy"/>
    <property type="evidence" value="ECO:0000250"/>
    <property type="project" value="UniProtKB"/>
</dbReference>
<dbReference type="GO" id="GO:0016579">
    <property type="term" value="P:protein deubiquitination"/>
    <property type="evidence" value="ECO:0000250"/>
    <property type="project" value="UniProtKB"/>
</dbReference>
<dbReference type="GO" id="GO:0006508">
    <property type="term" value="P:proteolysis"/>
    <property type="evidence" value="ECO:0007669"/>
    <property type="project" value="UniProtKB-KW"/>
</dbReference>
<dbReference type="GO" id="GO:0042981">
    <property type="term" value="P:regulation of apoptotic process"/>
    <property type="evidence" value="ECO:0007669"/>
    <property type="project" value="TreeGrafter"/>
</dbReference>
<dbReference type="GO" id="GO:0035019">
    <property type="term" value="P:somatic stem cell population maintenance"/>
    <property type="evidence" value="ECO:0000250"/>
    <property type="project" value="UniProtKB"/>
</dbReference>
<dbReference type="CDD" id="cd02661">
    <property type="entry name" value="Peptidase_C19E"/>
    <property type="match status" value="1"/>
</dbReference>
<dbReference type="FunFam" id="3.90.70.10:FF:000085">
    <property type="entry name" value="Ubiquitin carboxyl-terminal hydrolase 36"/>
    <property type="match status" value="1"/>
</dbReference>
<dbReference type="Gene3D" id="3.90.70.10">
    <property type="entry name" value="Cysteine proteinases"/>
    <property type="match status" value="1"/>
</dbReference>
<dbReference type="InterPro" id="IPR038765">
    <property type="entry name" value="Papain-like_cys_pep_sf"/>
</dbReference>
<dbReference type="InterPro" id="IPR050164">
    <property type="entry name" value="Peptidase_C19"/>
</dbReference>
<dbReference type="InterPro" id="IPR001394">
    <property type="entry name" value="Peptidase_C19_UCH"/>
</dbReference>
<dbReference type="InterPro" id="IPR018200">
    <property type="entry name" value="USP_CS"/>
</dbReference>
<dbReference type="InterPro" id="IPR028889">
    <property type="entry name" value="USP_dom"/>
</dbReference>
<dbReference type="PANTHER" id="PTHR24006">
    <property type="entry name" value="UBIQUITIN CARBOXYL-TERMINAL HYDROLASE"/>
    <property type="match status" value="1"/>
</dbReference>
<dbReference type="PANTHER" id="PTHR24006:SF758">
    <property type="entry name" value="UBIQUITIN CARBOXYL-TERMINAL HYDROLASE 36"/>
    <property type="match status" value="1"/>
</dbReference>
<dbReference type="Pfam" id="PF00443">
    <property type="entry name" value="UCH"/>
    <property type="match status" value="1"/>
</dbReference>
<dbReference type="SUPFAM" id="SSF54001">
    <property type="entry name" value="Cysteine proteinases"/>
    <property type="match status" value="1"/>
</dbReference>
<dbReference type="PROSITE" id="PS00972">
    <property type="entry name" value="USP_1"/>
    <property type="match status" value="1"/>
</dbReference>
<dbReference type="PROSITE" id="PS00973">
    <property type="entry name" value="USP_2"/>
    <property type="match status" value="1"/>
</dbReference>
<dbReference type="PROSITE" id="PS50235">
    <property type="entry name" value="USP_3"/>
    <property type="match status" value="1"/>
</dbReference>
<evidence type="ECO:0000250" key="1"/>
<evidence type="ECO:0000250" key="2">
    <source>
        <dbReference type="UniProtKB" id="Q9VRP5"/>
    </source>
</evidence>
<evidence type="ECO:0000255" key="3">
    <source>
        <dbReference type="PROSITE-ProRule" id="PRU10092"/>
    </source>
</evidence>
<evidence type="ECO:0000255" key="4">
    <source>
        <dbReference type="PROSITE-ProRule" id="PRU10093"/>
    </source>
</evidence>
<evidence type="ECO:0000256" key="5">
    <source>
        <dbReference type="SAM" id="MobiDB-lite"/>
    </source>
</evidence>
<evidence type="ECO:0000305" key="6"/>
<gene>
    <name type="primary">Usp36</name>
    <name type="synonym">scny</name>
    <name type="ORF">GD13899</name>
</gene>
<keyword id="KW-0378">Hydrolase</keyword>
<keyword id="KW-0539">Nucleus</keyword>
<keyword id="KW-0597">Phosphoprotein</keyword>
<keyword id="KW-0645">Protease</keyword>
<keyword id="KW-1185">Reference proteome</keyword>
<keyword id="KW-0788">Thiol protease</keyword>
<keyword id="KW-0833">Ubl conjugation pathway</keyword>
<name>UBP36_DROSI</name>
<accession>B4QIS3</accession>
<feature type="chain" id="PRO_0000378502" description="Ubiquitin carboxyl-terminal hydrolase 36">
    <location>
        <begin position="1"/>
        <end position="988"/>
    </location>
</feature>
<feature type="domain" description="USP">
    <location>
        <begin position="78"/>
        <end position="386"/>
    </location>
</feature>
<feature type="region of interest" description="Disordered" evidence="5">
    <location>
        <begin position="16"/>
        <end position="55"/>
    </location>
</feature>
<feature type="region of interest" description="Disordered" evidence="5">
    <location>
        <begin position="393"/>
        <end position="422"/>
    </location>
</feature>
<feature type="region of interest" description="Disordered" evidence="5">
    <location>
        <begin position="483"/>
        <end position="782"/>
    </location>
</feature>
<feature type="region of interest" description="Disordered" evidence="5">
    <location>
        <begin position="868"/>
        <end position="988"/>
    </location>
</feature>
<feature type="compositionally biased region" description="Low complexity" evidence="5">
    <location>
        <begin position="31"/>
        <end position="48"/>
    </location>
</feature>
<feature type="compositionally biased region" description="Low complexity" evidence="5">
    <location>
        <begin position="408"/>
        <end position="422"/>
    </location>
</feature>
<feature type="compositionally biased region" description="Low complexity" evidence="5">
    <location>
        <begin position="490"/>
        <end position="509"/>
    </location>
</feature>
<feature type="compositionally biased region" description="Polar residues" evidence="5">
    <location>
        <begin position="532"/>
        <end position="544"/>
    </location>
</feature>
<feature type="compositionally biased region" description="Acidic residues" evidence="5">
    <location>
        <begin position="592"/>
        <end position="601"/>
    </location>
</feature>
<feature type="compositionally biased region" description="Polar residues" evidence="5">
    <location>
        <begin position="602"/>
        <end position="631"/>
    </location>
</feature>
<feature type="compositionally biased region" description="Basic and acidic residues" evidence="5">
    <location>
        <begin position="632"/>
        <end position="649"/>
    </location>
</feature>
<feature type="compositionally biased region" description="Acidic residues" evidence="5">
    <location>
        <begin position="650"/>
        <end position="659"/>
    </location>
</feature>
<feature type="compositionally biased region" description="Low complexity" evidence="5">
    <location>
        <begin position="669"/>
        <end position="679"/>
    </location>
</feature>
<feature type="compositionally biased region" description="Pro residues" evidence="5">
    <location>
        <begin position="680"/>
        <end position="689"/>
    </location>
</feature>
<feature type="compositionally biased region" description="Acidic residues" evidence="5">
    <location>
        <begin position="707"/>
        <end position="717"/>
    </location>
</feature>
<feature type="compositionally biased region" description="Polar residues" evidence="5">
    <location>
        <begin position="735"/>
        <end position="747"/>
    </location>
</feature>
<feature type="compositionally biased region" description="Polar residues" evidence="5">
    <location>
        <begin position="762"/>
        <end position="782"/>
    </location>
</feature>
<feature type="compositionally biased region" description="Low complexity" evidence="5">
    <location>
        <begin position="892"/>
        <end position="903"/>
    </location>
</feature>
<feature type="compositionally biased region" description="Low complexity" evidence="5">
    <location>
        <begin position="930"/>
        <end position="943"/>
    </location>
</feature>
<feature type="active site" description="Nucleophile" evidence="3 4">
    <location>
        <position position="87"/>
    </location>
</feature>
<feature type="active site" description="Proton acceptor" evidence="3 4">
    <location>
        <position position="345"/>
    </location>
</feature>
<feature type="modified residue" description="Phosphoserine" evidence="1">
    <location>
        <position position="419"/>
    </location>
</feature>
<feature type="modified residue" description="Phosphoserine" evidence="1">
    <location>
        <position position="421"/>
    </location>
</feature>
<feature type="modified residue" description="Phosphothreonine" evidence="1">
    <location>
        <position position="561"/>
    </location>
</feature>
<feature type="modified residue" description="Phosphothreonine" evidence="1">
    <location>
        <position position="565"/>
    </location>
</feature>
<feature type="modified residue" description="Phosphoserine" evidence="1">
    <location>
        <position position="575"/>
    </location>
</feature>
<feature type="modified residue" description="Phosphoserine" evidence="1">
    <location>
        <position position="577"/>
    </location>
</feature>
<feature type="modified residue" description="Phosphoserine" evidence="1">
    <location>
        <position position="650"/>
    </location>
</feature>
<feature type="modified residue" description="Phosphoserine" evidence="1">
    <location>
        <position position="682"/>
    </location>
</feature>
<feature type="modified residue" description="Phosphothreonine" evidence="1">
    <location>
        <position position="685"/>
    </location>
</feature>
<feature type="modified residue" description="Phosphoserine" evidence="1">
    <location>
        <position position="688"/>
    </location>
</feature>
<feature type="modified residue" description="Phosphothreonine" evidence="1">
    <location>
        <position position="728"/>
    </location>
</feature>
<feature type="modified residue" description="Phosphoserine" evidence="1">
    <location>
        <position position="746"/>
    </location>
</feature>
<feature type="modified residue" description="Phosphothreonine" evidence="1">
    <location>
        <position position="749"/>
    </location>
</feature>
<reference key="1">
    <citation type="journal article" date="2007" name="Nature">
        <title>Evolution of genes and genomes on the Drosophila phylogeny.</title>
        <authorList>
            <consortium name="Drosophila 12 genomes consortium"/>
        </authorList>
    </citation>
    <scope>NUCLEOTIDE SEQUENCE [LARGE SCALE GENOMIC DNA]</scope>
</reference>
<comment type="function">
    <text evidence="2">Required for maintaining multiple types of adult stem cells, including male and female germline, epithelial follicle cell and intestinal stem cells. May function as a transcriptional repressor by continually deubiquiting histone H2B at the promoters of genes critical for cellular differentiation, thereby preventing histone H3 'Lys-4' trimethylation (H3K4). Controls selective autophagy activation by ubiquitinated proteins.</text>
</comment>
<comment type="catalytic activity">
    <reaction>
        <text>Thiol-dependent hydrolysis of ester, thioester, amide, peptide and isopeptide bonds formed by the C-terminal Gly of ubiquitin (a 76-residue protein attached to proteins as an intracellular targeting signal).</text>
        <dbReference type="EC" id="3.4.19.12"/>
    </reaction>
</comment>
<comment type="subunit">
    <text evidence="1">Interacts with atms/PAF1, but not with CycT.</text>
</comment>
<comment type="subcellular location">
    <subcellularLocation>
        <location evidence="1">Nucleus</location>
        <location evidence="1">Nucleolus</location>
    </subcellularLocation>
</comment>
<comment type="similarity">
    <text evidence="6">Belongs to the peptidase C19 family.</text>
</comment>